<comment type="function">
    <text evidence="5">Weakly inhibits the Kv7.1/KCNQ1 channel (10 uM of the toxin inhibits currents by 17.8%).</text>
</comment>
<comment type="subcellular location">
    <subcellularLocation>
        <location evidence="4">Secreted</location>
    </subcellularLocation>
</comment>
<comment type="tissue specificity">
    <text evidence="11">Expressed by the venom gland.</text>
</comment>
<comment type="domain">
    <text evidence="2">Has the structural arrangement of two alpha-helices stabilized by disulfide bonds (CSalpha/alpha 2(S-S)).</text>
</comment>
<comment type="similarity">
    <text evidence="10">Belongs to the short scorpion toxin superfamily. Potassium channel inhibitor kappa-KTx family. Kappa-KTx 2 subfamily.</text>
</comment>
<sequence length="65" mass="7142">MKTSGTVYVFLLLLAFGIFTDISSACSEQMDDEDSYEVEKRGNACIEVCLQHTGNPAECDKACDK</sequence>
<reference key="1">
    <citation type="journal article" date="2010" name="Proteomics">
        <title>Molecular diversity of toxic components from the scorpion Heterometrus petersii venom revealed by proteomic and transcriptome analysis.</title>
        <authorList>
            <person name="Ma Y."/>
            <person name="Zhao Y."/>
            <person name="Zhao R."/>
            <person name="Zhang W."/>
            <person name="He Y."/>
            <person name="Wu Y."/>
            <person name="Cao Z."/>
            <person name="Guo L."/>
            <person name="Li W."/>
        </authorList>
    </citation>
    <scope>NUCLEOTIDE SEQUENCE [MRNA]</scope>
    <scope>IDENTIFICATION BY MASS SPECTROMETRY</scope>
    <scope>SUBCELLULAR LOCATION</scope>
    <source>
        <tissue>Venom</tissue>
        <tissue>Venom gland</tissue>
    </source>
</reference>
<reference key="2">
    <citation type="journal article" date="2012" name="PLoS ONE">
        <title>Structural and functional diversity of acidic scorpion potassium channel toxins.</title>
        <authorList>
            <person name="Chen Z.Y."/>
            <person name="Zeng D.Y."/>
            <person name="Hu Y.T."/>
            <person name="He Y.W."/>
            <person name="Pan N."/>
            <person name="Ding J.P."/>
            <person name="Cao Z.J."/>
            <person name="Liu M.L."/>
            <person name="Li W.X."/>
            <person name="Yi H."/>
            <person name="Jiang L."/>
            <person name="Wu Y.L."/>
        </authorList>
    </citation>
    <scope>NUCLEOTIDE SEQUENCE [MRNA]</scope>
    <scope>FUNCTION</scope>
    <source>
        <tissue>Venom gland</tissue>
    </source>
</reference>
<reference key="3">
    <citation type="journal article" date="2013" name="PLoS ONE">
        <title>Genomic and structural characterization of Kunitz-type peptide LmKTT-1a highlights diversity and evolution of scorpion potassium channel toxins.</title>
        <authorList>
            <person name="Chen Z."/>
            <person name="Luo F."/>
            <person name="Feng J."/>
            <person name="Yang W."/>
            <person name="Zeng D."/>
            <person name="Zhao R."/>
            <person name="Cao Z."/>
            <person name="Liu M."/>
            <person name="Li W."/>
            <person name="Jiang L."/>
            <person name="Wu Y."/>
        </authorList>
    </citation>
    <scope>NUCLEOTIDE SEQUENCE [GENOMIC DNA]</scope>
</reference>
<reference key="4">
    <citation type="journal article" date="2012" name="Biochem. Pharmacol.">
        <title>Purification, molecular cloning and functional characterization of HelaTx1 (Heterometrus laoticus): the first member of a new kappa-KTX subfamily.</title>
        <authorList>
            <person name="Vandendriessche T."/>
            <person name="Kopljar I."/>
            <person name="Jenkins D.P."/>
            <person name="Diego-Garcia E."/>
            <person name="Abdel-Mottaleb Y."/>
            <person name="Vermassen E."/>
            <person name="Clynen E."/>
            <person name="Schoofs L."/>
            <person name="Wulff H."/>
            <person name="Snyders D."/>
            <person name="Tytgat J."/>
        </authorList>
    </citation>
    <scope>NOMENCLATURE</scope>
</reference>
<evidence type="ECO:0000250" key="1"/>
<evidence type="ECO:0000250" key="2">
    <source>
        <dbReference type="UniProtKB" id="P0C1Z3"/>
    </source>
</evidence>
<evidence type="ECO:0000255" key="3"/>
<evidence type="ECO:0000269" key="4">
    <source>
    </source>
</evidence>
<evidence type="ECO:0000269" key="5">
    <source>
    </source>
</evidence>
<evidence type="ECO:0000303" key="6">
    <source>
    </source>
</evidence>
<evidence type="ECO:0000303" key="7">
    <source>
    </source>
</evidence>
<evidence type="ECO:0000303" key="8">
    <source>
    </source>
</evidence>
<evidence type="ECO:0000303" key="9">
    <source>
    </source>
</evidence>
<evidence type="ECO:0000305" key="10"/>
<evidence type="ECO:0000305" key="11">
    <source>
    </source>
</evidence>
<feature type="signal peptide" evidence="3">
    <location>
        <begin position="1"/>
        <end position="26"/>
    </location>
</feature>
<feature type="propeptide" id="PRO_0000416798" evidence="1">
    <location>
        <begin position="27"/>
        <end position="39"/>
    </location>
</feature>
<feature type="peptide" id="PRO_0000416799" description="Potassium channel toxin kappa-KTx 2.7">
    <location>
        <begin position="42"/>
        <end position="64"/>
    </location>
</feature>
<feature type="disulfide bond" evidence="2">
    <location>
        <begin position="45"/>
        <end position="63"/>
    </location>
</feature>
<feature type="disulfide bond" evidence="2">
    <location>
        <begin position="49"/>
        <end position="59"/>
    </location>
</feature>
<dbReference type="EMBL" id="FD664203">
    <property type="status" value="NOT_ANNOTATED_CDS"/>
    <property type="molecule type" value="mRNA"/>
</dbReference>
<dbReference type="GO" id="GO:0005576">
    <property type="term" value="C:extracellular region"/>
    <property type="evidence" value="ECO:0007669"/>
    <property type="project" value="UniProtKB-SubCell"/>
</dbReference>
<dbReference type="GO" id="GO:0015459">
    <property type="term" value="F:potassium channel regulator activity"/>
    <property type="evidence" value="ECO:0007669"/>
    <property type="project" value="UniProtKB-KW"/>
</dbReference>
<dbReference type="GO" id="GO:0090729">
    <property type="term" value="F:toxin activity"/>
    <property type="evidence" value="ECO:0007669"/>
    <property type="project" value="UniProtKB-KW"/>
</dbReference>
<keyword id="KW-0165">Cleavage on pair of basic residues</keyword>
<keyword id="KW-1015">Disulfide bond</keyword>
<keyword id="KW-0872">Ion channel impairing toxin</keyword>
<keyword id="KW-0528">Neurotoxin</keyword>
<keyword id="KW-0632">Potassium channel impairing toxin</keyword>
<keyword id="KW-0964">Secreted</keyword>
<keyword id="KW-0732">Signal</keyword>
<keyword id="KW-0800">Toxin</keyword>
<keyword id="KW-1220">Voltage-gated potassium channel impairing toxin</keyword>
<accession>P0DJ34</accession>
<name>KKX27_HETPE</name>
<proteinExistence type="evidence at protein level"/>
<protein>
    <recommendedName>
        <fullName evidence="7">Potassium channel toxin kappa-KTx 2.7</fullName>
    </recommendedName>
    <alternativeName>
        <fullName evidence="6">HSP053C.1</fullName>
    </alternativeName>
    <alternativeName>
        <fullName evidence="8 9">Toxin HeTx203</fullName>
    </alternativeName>
    <alternativeName>
        <fullName evidence="8 9">Toxin kappa-KTx 2.6</fullName>
    </alternativeName>
</protein>
<organism>
    <name type="scientific">Heterometrus petersii</name>
    <name type="common">Asian forest scorpion</name>
    <dbReference type="NCBI Taxonomy" id="754296"/>
    <lineage>
        <taxon>Eukaryota</taxon>
        <taxon>Metazoa</taxon>
        <taxon>Ecdysozoa</taxon>
        <taxon>Arthropoda</taxon>
        <taxon>Chelicerata</taxon>
        <taxon>Arachnida</taxon>
        <taxon>Scorpiones</taxon>
        <taxon>Iurida</taxon>
        <taxon>Scorpionoidea</taxon>
        <taxon>Scorpionidae</taxon>
        <taxon>Heterometrinae</taxon>
        <taxon>Heterometrus</taxon>
    </lineage>
</organism>